<sequence length="433" mass="48181">MSIDIDWERATSGPDGELLAERIRSFIHDKFQQIVLPRFIRSVQVTSFNFGTIPPELEIRDLSDPFPDFFEDDDENFSDSSEERSPTREPVDRYGNRVDSWQANSPGGPGGQMYGRVGFNQPLRMPEWEEHTGISPLRGPMNFGDINPYLFPRSGTPGIPGGTSNLGYYMPLSGLSNSQTPLGAVARGNPFSGGWPDAHGARPSRRRSEAEPDSAQSRPSTANTGNTLPSRDSMSVSDPHHCHASQGMSNNQGQVLEPNIPPTSPNHPLDDTPPRRMREQKAEDFQVFCRTKYAGNISLSLTAEILLDYPMPSFVGLPLKLNITGLTFDAVAVIAYIRRRIHFCFLSPDDADTLMGPETAAGSGGGDTLEPNSPRRKHSSLLREIRVESEIGRKENGKQALKNVGKLEKFVLEQVRRIFEEEFVYPSFWTFLI</sequence>
<keyword id="KW-0256">Endoplasmic reticulum</keyword>
<keyword id="KW-0445">Lipid transport</keyword>
<keyword id="KW-0446">Lipid-binding</keyword>
<keyword id="KW-0472">Membrane</keyword>
<keyword id="KW-0496">Mitochondrion</keyword>
<keyword id="KW-1000">Mitochondrion outer membrane</keyword>
<keyword id="KW-1185">Reference proteome</keyword>
<keyword id="KW-0813">Transport</keyword>
<comment type="function">
    <text evidence="1">Component of the ERMES/MDM complex, which serves as a molecular tether to connect the endoplasmic reticulum (ER) and mitochondria. Components of this complex are involved in the control of mitochondrial shape and protein biogenesis, and function in nonvesicular lipid trafficking between the ER and mitochondria. MDM12 is required for the interaction of the ER-resident membrane protein MMM1 and the outer mitochondrial membrane-resident beta-barrel protein MDM10. The MDM12-MMM1 subcomplex functions in the major beta-barrel assembly pathway that is responsible for biogenesis of all mitochondrial outer membrane beta-barrel proteins, and acts in a late step after the SAM complex. The MDM10-MDM12-MMM1 subcomplex further acts in the TOM40-specific pathway after the action of the MDM12-MMM1 complex. Essential for establishing and maintaining the structure of mitochondria and maintenance of mtDNA nucleoids.</text>
</comment>
<comment type="subunit">
    <text evidence="1">Component of the ER-mitochondria encounter structure (ERMES) or MDM complex, composed of MMM1, MDM10, MDM12 and MDM34. A MMM1 homodimer associates with one molecule of MDM12 on each side in a pairwise head-to-tail manner, and the SMP-LTD domains of MMM1 and MDM12 generate a continuous hydrophobic tunnel for phospholipid trafficking.</text>
</comment>
<comment type="subcellular location">
    <subcellularLocation>
        <location evidence="1">Mitochondrion outer membrane</location>
        <topology evidence="1">Peripheral membrane protein</topology>
        <orientation evidence="1">Cytoplasmic side</orientation>
    </subcellularLocation>
    <subcellularLocation>
        <location evidence="1">Endoplasmic reticulum membrane</location>
        <topology evidence="1">Peripheral membrane protein</topology>
        <orientation evidence="1">Cytoplasmic side</orientation>
    </subcellularLocation>
    <text evidence="1">The ERMES/MDM complex localizes to a few discrete foci (around 10 per single cell), that represent mitochondria-endoplasmic reticulum junctions. These foci are often found next to mtDNA nucleoids.</text>
</comment>
<comment type="domain">
    <text evidence="1">The SMP-LTD domain is a barrel-like domain that can bind various types of glycerophospholipids in its interior and mediate their transfer between two adjacent bilayers.</text>
</comment>
<comment type="similarity">
    <text evidence="1">Belongs to the MDM12 family.</text>
</comment>
<comment type="sequence caution" evidence="3">
    <conflict type="erroneous initiation">
        <sequence resource="EMBL-CDS" id="EDN05782"/>
    </conflict>
</comment>
<feature type="chain" id="PRO_0000384264" description="Mitochondrial distribution and morphology protein 12">
    <location>
        <begin position="1"/>
        <end position="433"/>
    </location>
</feature>
<feature type="domain" description="SMP-LTD" evidence="1">
    <location>
        <begin position="1"/>
        <end position="433"/>
    </location>
</feature>
<feature type="region of interest" description="Disordered" evidence="2">
    <location>
        <begin position="62"/>
        <end position="113"/>
    </location>
</feature>
<feature type="region of interest" description="Disordered" evidence="2">
    <location>
        <begin position="180"/>
        <end position="279"/>
    </location>
</feature>
<feature type="region of interest" description="Disordered" evidence="2">
    <location>
        <begin position="356"/>
        <end position="376"/>
    </location>
</feature>
<feature type="compositionally biased region" description="Basic and acidic residues" evidence="2">
    <location>
        <begin position="81"/>
        <end position="96"/>
    </location>
</feature>
<feature type="compositionally biased region" description="Polar residues" evidence="2">
    <location>
        <begin position="214"/>
        <end position="236"/>
    </location>
</feature>
<feature type="compositionally biased region" description="Basic and acidic residues" evidence="2">
    <location>
        <begin position="268"/>
        <end position="279"/>
    </location>
</feature>
<proteinExistence type="inferred from homology"/>
<protein>
    <recommendedName>
        <fullName evidence="1">Mitochondrial distribution and morphology protein 12</fullName>
    </recommendedName>
    <alternativeName>
        <fullName evidence="1">Mitochondrial inheritance component MDM12</fullName>
    </alternativeName>
</protein>
<reference key="1">
    <citation type="journal article" date="2009" name="Genome Res.">
        <title>Comparative genomic analyses of the human fungal pathogens Coccidioides and their relatives.</title>
        <authorList>
            <person name="Sharpton T.J."/>
            <person name="Stajich J.E."/>
            <person name="Rounsley S.D."/>
            <person name="Gardner M.J."/>
            <person name="Wortman J.R."/>
            <person name="Jordar V.S."/>
            <person name="Maiti R."/>
            <person name="Kodira C.D."/>
            <person name="Neafsey D.E."/>
            <person name="Zeng Q."/>
            <person name="Hung C.-Y."/>
            <person name="McMahan C."/>
            <person name="Muszewska A."/>
            <person name="Grynberg M."/>
            <person name="Mandel M.A."/>
            <person name="Kellner E.M."/>
            <person name="Barker B.M."/>
            <person name="Galgiani J.N."/>
            <person name="Orbach M.J."/>
            <person name="Kirkland T.N."/>
            <person name="Cole G.T."/>
            <person name="Henn M.R."/>
            <person name="Birren B.W."/>
            <person name="Taylor J.W."/>
        </authorList>
    </citation>
    <scope>NUCLEOTIDE SEQUENCE [LARGE SCALE GENOMIC DNA]</scope>
    <source>
        <strain>NAm1 / WU24</strain>
    </source>
</reference>
<evidence type="ECO:0000255" key="1">
    <source>
        <dbReference type="HAMAP-Rule" id="MF_03104"/>
    </source>
</evidence>
<evidence type="ECO:0000256" key="2">
    <source>
        <dbReference type="SAM" id="MobiDB-lite"/>
    </source>
</evidence>
<evidence type="ECO:0000305" key="3"/>
<organism>
    <name type="scientific">Ajellomyces capsulatus (strain NAm1 / WU24)</name>
    <name type="common">Darling's disease fungus</name>
    <name type="synonym">Histoplasma capsulatum</name>
    <dbReference type="NCBI Taxonomy" id="2059318"/>
    <lineage>
        <taxon>Eukaryota</taxon>
        <taxon>Fungi</taxon>
        <taxon>Dikarya</taxon>
        <taxon>Ascomycota</taxon>
        <taxon>Pezizomycotina</taxon>
        <taxon>Eurotiomycetes</taxon>
        <taxon>Eurotiomycetidae</taxon>
        <taxon>Onygenales</taxon>
        <taxon>Ajellomycetaceae</taxon>
        <taxon>Histoplasma</taxon>
    </lineage>
</organism>
<gene>
    <name evidence="1" type="primary">MDM12</name>
    <name type="ORF">HCAG_02385</name>
</gene>
<dbReference type="EMBL" id="CH476656">
    <property type="protein sequence ID" value="EDN05782.1"/>
    <property type="status" value="ALT_INIT"/>
    <property type="molecule type" value="Genomic_DNA"/>
</dbReference>
<dbReference type="SMR" id="A6QYC8"/>
<dbReference type="STRING" id="339724.A6QYC8"/>
<dbReference type="KEGG" id="aje:HCAG_02385"/>
<dbReference type="HOGENOM" id="CLU_026794_0_0_1"/>
<dbReference type="OrthoDB" id="5194at299071"/>
<dbReference type="Proteomes" id="UP000009297">
    <property type="component" value="Unassembled WGS sequence"/>
</dbReference>
<dbReference type="GO" id="GO:0005789">
    <property type="term" value="C:endoplasmic reticulum membrane"/>
    <property type="evidence" value="ECO:0007669"/>
    <property type="project" value="UniProtKB-SubCell"/>
</dbReference>
<dbReference type="GO" id="GO:0032865">
    <property type="term" value="C:ERMES complex"/>
    <property type="evidence" value="ECO:0007669"/>
    <property type="project" value="UniProtKB-UniRule"/>
</dbReference>
<dbReference type="GO" id="GO:0008289">
    <property type="term" value="F:lipid binding"/>
    <property type="evidence" value="ECO:0007669"/>
    <property type="project" value="UniProtKB-KW"/>
</dbReference>
<dbReference type="GO" id="GO:0000002">
    <property type="term" value="P:mitochondrial genome maintenance"/>
    <property type="evidence" value="ECO:0007669"/>
    <property type="project" value="UniProtKB-UniRule"/>
</dbReference>
<dbReference type="GO" id="GO:1990456">
    <property type="term" value="P:mitochondrion-endoplasmic reticulum membrane tethering"/>
    <property type="evidence" value="ECO:0007669"/>
    <property type="project" value="TreeGrafter"/>
</dbReference>
<dbReference type="GO" id="GO:0015914">
    <property type="term" value="P:phospholipid transport"/>
    <property type="evidence" value="ECO:0007669"/>
    <property type="project" value="TreeGrafter"/>
</dbReference>
<dbReference type="GO" id="GO:0045040">
    <property type="term" value="P:protein insertion into mitochondrial outer membrane"/>
    <property type="evidence" value="ECO:0007669"/>
    <property type="project" value="UniProtKB-UniRule"/>
</dbReference>
<dbReference type="CDD" id="cd21672">
    <property type="entry name" value="SMP_Mdm12"/>
    <property type="match status" value="1"/>
</dbReference>
<dbReference type="HAMAP" id="MF_03104">
    <property type="entry name" value="Mdm12"/>
    <property type="match status" value="1"/>
</dbReference>
<dbReference type="InterPro" id="IPR027532">
    <property type="entry name" value="Mdm12"/>
</dbReference>
<dbReference type="InterPro" id="IPR019411">
    <property type="entry name" value="MMM1_dom"/>
</dbReference>
<dbReference type="InterPro" id="IPR031468">
    <property type="entry name" value="SMP_LBD"/>
</dbReference>
<dbReference type="PANTHER" id="PTHR28204">
    <property type="entry name" value="MITOCHONDRIAL DISTRIBUTION AND MORPHOLOGY PROTEIN 12"/>
    <property type="match status" value="1"/>
</dbReference>
<dbReference type="PANTHER" id="PTHR28204:SF1">
    <property type="entry name" value="MITOCHONDRIAL DISTRIBUTION AND MORPHOLOGY PROTEIN 12"/>
    <property type="match status" value="1"/>
</dbReference>
<dbReference type="Pfam" id="PF10296">
    <property type="entry name" value="MMM1"/>
    <property type="match status" value="1"/>
</dbReference>
<dbReference type="PROSITE" id="PS51847">
    <property type="entry name" value="SMP"/>
    <property type="match status" value="1"/>
</dbReference>
<name>MDM12_AJECN</name>
<accession>A6QYC8</accession>